<feature type="chain" id="PRO_1000046172" description="Large ribosomal subunit protein uL11">
    <location>
        <begin position="1"/>
        <end position="144"/>
    </location>
</feature>
<sequence length="144" mass="15202">MAPKKKKVTGLIKLQIQAGQANPAPPVGPALGAHGVNIMEFCKAYNAATENQRGNVVPVEITVYEDRSFDFKLKTPPAAKLLLKAAGLQKGSGVPHTQKVGKVSMAQVREIAETKKEDLNARDIDAAAKIIAGTARSMGITVEG</sequence>
<reference key="1">
    <citation type="journal article" date="2007" name="Microbiology">
        <title>Comparative analysis of the Corynebacterium glutamicum group and complete genome sequence of strain R.</title>
        <authorList>
            <person name="Yukawa H."/>
            <person name="Omumasaba C.A."/>
            <person name="Nonaka H."/>
            <person name="Kos P."/>
            <person name="Okai N."/>
            <person name="Suzuki N."/>
            <person name="Suda M."/>
            <person name="Tsuge Y."/>
            <person name="Watanabe J."/>
            <person name="Ikeda Y."/>
            <person name="Vertes A.A."/>
            <person name="Inui M."/>
        </authorList>
    </citation>
    <scope>NUCLEOTIDE SEQUENCE [LARGE SCALE GENOMIC DNA]</scope>
    <source>
        <strain>R</strain>
    </source>
</reference>
<dbReference type="EMBL" id="AP009044">
    <property type="protein sequence ID" value="BAF53547.1"/>
    <property type="molecule type" value="Genomic_DNA"/>
</dbReference>
<dbReference type="RefSeq" id="WP_003854189.1">
    <property type="nucleotide sequence ID" value="NC_009342.1"/>
</dbReference>
<dbReference type="SMR" id="A4QBF0"/>
<dbReference type="KEGG" id="cgt:cgR_0579"/>
<dbReference type="HOGENOM" id="CLU_074237_2_1_11"/>
<dbReference type="PhylomeDB" id="A4QBF0"/>
<dbReference type="Proteomes" id="UP000006698">
    <property type="component" value="Chromosome"/>
</dbReference>
<dbReference type="GO" id="GO:0022625">
    <property type="term" value="C:cytosolic large ribosomal subunit"/>
    <property type="evidence" value="ECO:0007669"/>
    <property type="project" value="TreeGrafter"/>
</dbReference>
<dbReference type="GO" id="GO:0070180">
    <property type="term" value="F:large ribosomal subunit rRNA binding"/>
    <property type="evidence" value="ECO:0007669"/>
    <property type="project" value="UniProtKB-UniRule"/>
</dbReference>
<dbReference type="GO" id="GO:0003735">
    <property type="term" value="F:structural constituent of ribosome"/>
    <property type="evidence" value="ECO:0007669"/>
    <property type="project" value="InterPro"/>
</dbReference>
<dbReference type="GO" id="GO:0006412">
    <property type="term" value="P:translation"/>
    <property type="evidence" value="ECO:0007669"/>
    <property type="project" value="UniProtKB-UniRule"/>
</dbReference>
<dbReference type="CDD" id="cd00349">
    <property type="entry name" value="Ribosomal_L11"/>
    <property type="match status" value="1"/>
</dbReference>
<dbReference type="FunFam" id="1.10.10.250:FF:000001">
    <property type="entry name" value="50S ribosomal protein L11"/>
    <property type="match status" value="1"/>
</dbReference>
<dbReference type="FunFam" id="3.30.1550.10:FF:000001">
    <property type="entry name" value="50S ribosomal protein L11"/>
    <property type="match status" value="1"/>
</dbReference>
<dbReference type="Gene3D" id="1.10.10.250">
    <property type="entry name" value="Ribosomal protein L11, C-terminal domain"/>
    <property type="match status" value="1"/>
</dbReference>
<dbReference type="Gene3D" id="3.30.1550.10">
    <property type="entry name" value="Ribosomal protein L11/L12, N-terminal domain"/>
    <property type="match status" value="1"/>
</dbReference>
<dbReference type="HAMAP" id="MF_00736">
    <property type="entry name" value="Ribosomal_uL11"/>
    <property type="match status" value="1"/>
</dbReference>
<dbReference type="InterPro" id="IPR000911">
    <property type="entry name" value="Ribosomal_uL11"/>
</dbReference>
<dbReference type="InterPro" id="IPR006519">
    <property type="entry name" value="Ribosomal_uL11_bac-typ"/>
</dbReference>
<dbReference type="InterPro" id="IPR020783">
    <property type="entry name" value="Ribosomal_uL11_C"/>
</dbReference>
<dbReference type="InterPro" id="IPR036769">
    <property type="entry name" value="Ribosomal_uL11_C_sf"/>
</dbReference>
<dbReference type="InterPro" id="IPR020785">
    <property type="entry name" value="Ribosomal_uL11_CS"/>
</dbReference>
<dbReference type="InterPro" id="IPR020784">
    <property type="entry name" value="Ribosomal_uL11_N"/>
</dbReference>
<dbReference type="InterPro" id="IPR036796">
    <property type="entry name" value="Ribosomal_uL11_N_sf"/>
</dbReference>
<dbReference type="NCBIfam" id="TIGR01632">
    <property type="entry name" value="L11_bact"/>
    <property type="match status" value="1"/>
</dbReference>
<dbReference type="PANTHER" id="PTHR11661">
    <property type="entry name" value="60S RIBOSOMAL PROTEIN L12"/>
    <property type="match status" value="1"/>
</dbReference>
<dbReference type="PANTHER" id="PTHR11661:SF1">
    <property type="entry name" value="LARGE RIBOSOMAL SUBUNIT PROTEIN UL11M"/>
    <property type="match status" value="1"/>
</dbReference>
<dbReference type="Pfam" id="PF00298">
    <property type="entry name" value="Ribosomal_L11"/>
    <property type="match status" value="1"/>
</dbReference>
<dbReference type="Pfam" id="PF03946">
    <property type="entry name" value="Ribosomal_L11_N"/>
    <property type="match status" value="1"/>
</dbReference>
<dbReference type="SMART" id="SM00649">
    <property type="entry name" value="RL11"/>
    <property type="match status" value="1"/>
</dbReference>
<dbReference type="SUPFAM" id="SSF54747">
    <property type="entry name" value="Ribosomal L11/L12e N-terminal domain"/>
    <property type="match status" value="1"/>
</dbReference>
<dbReference type="SUPFAM" id="SSF46906">
    <property type="entry name" value="Ribosomal protein L11, C-terminal domain"/>
    <property type="match status" value="1"/>
</dbReference>
<dbReference type="PROSITE" id="PS00359">
    <property type="entry name" value="RIBOSOMAL_L11"/>
    <property type="match status" value="1"/>
</dbReference>
<keyword id="KW-0488">Methylation</keyword>
<keyword id="KW-0687">Ribonucleoprotein</keyword>
<keyword id="KW-0689">Ribosomal protein</keyword>
<keyword id="KW-0694">RNA-binding</keyword>
<keyword id="KW-0699">rRNA-binding</keyword>
<proteinExistence type="inferred from homology"/>
<evidence type="ECO:0000255" key="1">
    <source>
        <dbReference type="HAMAP-Rule" id="MF_00736"/>
    </source>
</evidence>
<evidence type="ECO:0000305" key="2"/>
<name>RL11_CORGB</name>
<gene>
    <name evidence="1" type="primary">rplK</name>
    <name type="ordered locus">cgR_0579</name>
</gene>
<accession>A4QBF0</accession>
<comment type="function">
    <text evidence="1">Forms part of the ribosomal stalk which helps the ribosome interact with GTP-bound translation factors.</text>
</comment>
<comment type="subunit">
    <text evidence="1">Part of the ribosomal stalk of the 50S ribosomal subunit. Interacts with L10 and the large rRNA to form the base of the stalk. L10 forms an elongated spine to which L12 dimers bind in a sequential fashion forming a multimeric L10(L12)X complex.</text>
</comment>
<comment type="PTM">
    <text evidence="1">One or more lysine residues are methylated.</text>
</comment>
<comment type="similarity">
    <text evidence="1">Belongs to the universal ribosomal protein uL11 family.</text>
</comment>
<protein>
    <recommendedName>
        <fullName evidence="1">Large ribosomal subunit protein uL11</fullName>
    </recommendedName>
    <alternativeName>
        <fullName evidence="2">50S ribosomal protein L11</fullName>
    </alternativeName>
</protein>
<organism>
    <name type="scientific">Corynebacterium glutamicum (strain R)</name>
    <dbReference type="NCBI Taxonomy" id="340322"/>
    <lineage>
        <taxon>Bacteria</taxon>
        <taxon>Bacillati</taxon>
        <taxon>Actinomycetota</taxon>
        <taxon>Actinomycetes</taxon>
        <taxon>Mycobacteriales</taxon>
        <taxon>Corynebacteriaceae</taxon>
        <taxon>Corynebacterium</taxon>
    </lineage>
</organism>